<gene>
    <name type="primary">ycfJ</name>
    <name type="ordered locus">b1110</name>
    <name type="ordered locus">JW1096</name>
</gene>
<reference key="1">
    <citation type="journal article" date="1996" name="DNA Res.">
        <title>A 718-kb DNA sequence of the Escherichia coli K-12 genome corresponding to the 12.7-28.0 min region on the linkage map.</title>
        <authorList>
            <person name="Oshima T."/>
            <person name="Aiba H."/>
            <person name="Baba T."/>
            <person name="Fujita K."/>
            <person name="Hayashi K."/>
            <person name="Honjo A."/>
            <person name="Ikemoto K."/>
            <person name="Inada T."/>
            <person name="Itoh T."/>
            <person name="Kajihara M."/>
            <person name="Kanai K."/>
            <person name="Kashimoto K."/>
            <person name="Kimura S."/>
            <person name="Kitagawa M."/>
            <person name="Makino K."/>
            <person name="Masuda S."/>
            <person name="Miki T."/>
            <person name="Mizobuchi K."/>
            <person name="Mori H."/>
            <person name="Motomura K."/>
            <person name="Nakamura Y."/>
            <person name="Nashimoto H."/>
            <person name="Nishio Y."/>
            <person name="Saito N."/>
            <person name="Sampei G."/>
            <person name="Seki Y."/>
            <person name="Tagami H."/>
            <person name="Takemoto K."/>
            <person name="Wada C."/>
            <person name="Yamamoto Y."/>
            <person name="Yano M."/>
            <person name="Horiuchi T."/>
        </authorList>
    </citation>
    <scope>NUCLEOTIDE SEQUENCE [LARGE SCALE GENOMIC DNA]</scope>
    <source>
        <strain>K12 / W3110 / ATCC 27325 / DSM 5911</strain>
    </source>
</reference>
<reference key="2">
    <citation type="journal article" date="1997" name="Science">
        <title>The complete genome sequence of Escherichia coli K-12.</title>
        <authorList>
            <person name="Blattner F.R."/>
            <person name="Plunkett G. III"/>
            <person name="Bloch C.A."/>
            <person name="Perna N.T."/>
            <person name="Burland V."/>
            <person name="Riley M."/>
            <person name="Collado-Vides J."/>
            <person name="Glasner J.D."/>
            <person name="Rode C.K."/>
            <person name="Mayhew G.F."/>
            <person name="Gregor J."/>
            <person name="Davis N.W."/>
            <person name="Kirkpatrick H.A."/>
            <person name="Goeden M.A."/>
            <person name="Rose D.J."/>
            <person name="Mau B."/>
            <person name="Shao Y."/>
        </authorList>
    </citation>
    <scope>NUCLEOTIDE SEQUENCE [LARGE SCALE GENOMIC DNA]</scope>
    <source>
        <strain>K12 / MG1655 / ATCC 47076</strain>
    </source>
</reference>
<reference key="3">
    <citation type="journal article" date="2006" name="Mol. Syst. Biol.">
        <title>Highly accurate genome sequences of Escherichia coli K-12 strains MG1655 and W3110.</title>
        <authorList>
            <person name="Hayashi K."/>
            <person name="Morooka N."/>
            <person name="Yamamoto Y."/>
            <person name="Fujita K."/>
            <person name="Isono K."/>
            <person name="Choi S."/>
            <person name="Ohtsubo E."/>
            <person name="Baba T."/>
            <person name="Wanner B.L."/>
            <person name="Mori H."/>
            <person name="Horiuchi T."/>
        </authorList>
    </citation>
    <scope>NUCLEOTIDE SEQUENCE [LARGE SCALE GENOMIC DNA]</scope>
    <source>
        <strain>K12 / W3110 / ATCC 27325 / DSM 5911</strain>
    </source>
</reference>
<reference key="4">
    <citation type="journal article" date="1981" name="Eur. J. Biochem.">
        <title>Nucleotide sequence coding for the respiratory NADH dehydrogenase of Escherichia coli. UUG initiation codon.</title>
        <authorList>
            <person name="Young J.G."/>
            <person name="Rogers B.L."/>
            <person name="Campbell H.D."/>
            <person name="Jaworowski A."/>
            <person name="Shaw D.C."/>
        </authorList>
    </citation>
    <scope>NUCLEOTIDE SEQUENCE [GENOMIC DNA] OF 1-63</scope>
    <source>
        <strain>K12</strain>
    </source>
</reference>
<reference key="5">
    <citation type="journal article" date="1994" name="Nucleic Acids Res.">
        <title>Intrinsic and extrinsic approaches for detecting genes in a bacterial genome.</title>
        <authorList>
            <person name="Borodovsky M."/>
            <person name="Rudd K.E."/>
            <person name="Koonin E.V."/>
        </authorList>
    </citation>
    <scope>IDENTIFICATION</scope>
</reference>
<organism>
    <name type="scientific">Escherichia coli (strain K12)</name>
    <dbReference type="NCBI Taxonomy" id="83333"/>
    <lineage>
        <taxon>Bacteria</taxon>
        <taxon>Pseudomonadati</taxon>
        <taxon>Pseudomonadota</taxon>
        <taxon>Gammaproteobacteria</taxon>
        <taxon>Enterobacterales</taxon>
        <taxon>Enterobacteriaceae</taxon>
        <taxon>Escherichia</taxon>
    </lineage>
</organism>
<sequence length="179" mass="18920">MNKSMLAGIGIGVAAALGVAAVASLNVFERGPQYAQVVSATPIKETVKTPRQECRNVTVTHRRPVQDENRITGSVLGAVAGGVIGHQFGGGRGKDVATVVGALGGGYAGNQIQGSLQESDTYTTTQQRCKTVYDKSEKMLGYDVTYKIGDQQGKIRMDRDPGTQIPLDSNGQLILNNKV</sequence>
<protein>
    <recommendedName>
        <fullName>Uncharacterized protein YcfJ</fullName>
    </recommendedName>
</protein>
<keyword id="KW-0472">Membrane</keyword>
<keyword id="KW-1185">Reference proteome</keyword>
<keyword id="KW-0812">Transmembrane</keyword>
<keyword id="KW-1133">Transmembrane helix</keyword>
<proteinExistence type="predicted"/>
<dbReference type="EMBL" id="U00096">
    <property type="protein sequence ID" value="AAC74194.1"/>
    <property type="molecule type" value="Genomic_DNA"/>
</dbReference>
<dbReference type="EMBL" id="AP009048">
    <property type="protein sequence ID" value="BAA35925.1"/>
    <property type="molecule type" value="Genomic_DNA"/>
</dbReference>
<dbReference type="EMBL" id="V00306">
    <property type="status" value="NOT_ANNOTATED_CDS"/>
    <property type="molecule type" value="Genomic_DNA"/>
</dbReference>
<dbReference type="PIR" id="C64855">
    <property type="entry name" value="C64855"/>
</dbReference>
<dbReference type="RefSeq" id="NP_415628.1">
    <property type="nucleotide sequence ID" value="NC_000913.3"/>
</dbReference>
<dbReference type="RefSeq" id="WP_001043459.1">
    <property type="nucleotide sequence ID" value="NZ_STEB01000016.1"/>
</dbReference>
<dbReference type="BioGRID" id="4263207">
    <property type="interactions" value="14"/>
</dbReference>
<dbReference type="FunCoup" id="P0AB35">
    <property type="interactions" value="51"/>
</dbReference>
<dbReference type="IntAct" id="P0AB35">
    <property type="interactions" value="1"/>
</dbReference>
<dbReference type="STRING" id="511145.b1110"/>
<dbReference type="PaxDb" id="511145-b1110"/>
<dbReference type="EnsemblBacteria" id="AAC74194">
    <property type="protein sequence ID" value="AAC74194"/>
    <property type="gene ID" value="b1110"/>
</dbReference>
<dbReference type="GeneID" id="945977"/>
<dbReference type="KEGG" id="ecj:JW1096"/>
<dbReference type="KEGG" id="eco:b1110"/>
<dbReference type="KEGG" id="ecoc:C3026_06695"/>
<dbReference type="PATRIC" id="fig|511145.12.peg.1154"/>
<dbReference type="EchoBASE" id="EB2338"/>
<dbReference type="eggNOG" id="COG3134">
    <property type="taxonomic scope" value="Bacteria"/>
</dbReference>
<dbReference type="HOGENOM" id="CLU_094245_1_0_6"/>
<dbReference type="InParanoid" id="P0AB35"/>
<dbReference type="OMA" id="TTTQTRC"/>
<dbReference type="OrthoDB" id="9132795at2"/>
<dbReference type="PhylomeDB" id="P0AB35"/>
<dbReference type="BioCyc" id="EcoCyc:EG12444-MONOMER"/>
<dbReference type="PRO" id="PR:P0AB35"/>
<dbReference type="Proteomes" id="UP000000625">
    <property type="component" value="Chromosome"/>
</dbReference>
<dbReference type="GO" id="GO:0019867">
    <property type="term" value="C:outer membrane"/>
    <property type="evidence" value="ECO:0007669"/>
    <property type="project" value="InterPro"/>
</dbReference>
<dbReference type="GO" id="GO:1900190">
    <property type="term" value="P:regulation of single-species biofilm formation"/>
    <property type="evidence" value="ECO:0000315"/>
    <property type="project" value="EcoCyc"/>
</dbReference>
<dbReference type="InterPro" id="IPR051407">
    <property type="entry name" value="Bact_OM_lipoprot/Surf_antigen"/>
</dbReference>
<dbReference type="InterPro" id="IPR008816">
    <property type="entry name" value="Gly_zipper_2TM_dom"/>
</dbReference>
<dbReference type="NCBIfam" id="NF008437">
    <property type="entry name" value="PRK11280.1"/>
    <property type="match status" value="1"/>
</dbReference>
<dbReference type="PANTHER" id="PTHR35603">
    <property type="match status" value="1"/>
</dbReference>
<dbReference type="PANTHER" id="PTHR35603:SF2">
    <property type="entry name" value="OUTER MEMBRANE LIPOPROTEIN"/>
    <property type="match status" value="1"/>
</dbReference>
<dbReference type="Pfam" id="PF05433">
    <property type="entry name" value="Rick_17kDa_Anti"/>
    <property type="match status" value="1"/>
</dbReference>
<accession>P0AB35</accession>
<accession>P37796</accession>
<accession>P75951</accession>
<evidence type="ECO:0000255" key="1"/>
<evidence type="ECO:0000305" key="2"/>
<feature type="chain" id="PRO_0000168832" description="Uncharacterized protein YcfJ">
    <location>
        <begin position="1"/>
        <end position="179"/>
    </location>
</feature>
<feature type="transmembrane region" description="Helical" evidence="1">
    <location>
        <begin position="5"/>
        <end position="25"/>
    </location>
</feature>
<name>YCFJ_ECOLI</name>
<comment type="subcellular location">
    <subcellularLocation>
        <location evidence="2">Membrane</location>
        <topology evidence="2">Single-pass membrane protein</topology>
    </subcellularLocation>
</comment>
<comment type="similarity">
    <text evidence="2">To Rickettsia 17 kDa surface antigen.</text>
</comment>